<gene>
    <name evidence="1" type="primary">hutH</name>
    <name type="ordered locus">Mnod_1038</name>
</gene>
<evidence type="ECO:0000255" key="1">
    <source>
        <dbReference type="HAMAP-Rule" id="MF_00229"/>
    </source>
</evidence>
<keyword id="KW-0963">Cytoplasm</keyword>
<keyword id="KW-0369">Histidine metabolism</keyword>
<keyword id="KW-0456">Lyase</keyword>
<keyword id="KW-1185">Reference proteome</keyword>
<protein>
    <recommendedName>
        <fullName evidence="1">Histidine ammonia-lyase</fullName>
        <shortName evidence="1">Histidase</shortName>
        <ecNumber evidence="1">4.3.1.3</ecNumber>
    </recommendedName>
</protein>
<comment type="catalytic activity">
    <reaction evidence="1">
        <text>L-histidine = trans-urocanate + NH4(+)</text>
        <dbReference type="Rhea" id="RHEA:21232"/>
        <dbReference type="ChEBI" id="CHEBI:17771"/>
        <dbReference type="ChEBI" id="CHEBI:28938"/>
        <dbReference type="ChEBI" id="CHEBI:57595"/>
        <dbReference type="EC" id="4.3.1.3"/>
    </reaction>
</comment>
<comment type="pathway">
    <text evidence="1">Amino-acid degradation; L-histidine degradation into L-glutamate; N-formimidoyl-L-glutamate from L-histidine: step 1/3.</text>
</comment>
<comment type="subcellular location">
    <subcellularLocation>
        <location evidence="1">Cytoplasm</location>
    </subcellularLocation>
</comment>
<comment type="PTM">
    <text evidence="1">Contains an active site 4-methylidene-imidazol-5-one (MIO), which is formed autocatalytically by cyclization and dehydration of residues Ala-Ser-Gly.</text>
</comment>
<comment type="similarity">
    <text evidence="1">Belongs to the PAL/histidase family.</text>
</comment>
<accession>B8II08</accession>
<name>HUTH_METNO</name>
<sequence length="515" mass="52820">MSSVAITPGCVPLSGWRAILAGAAIRLDESCRPAIARAAEAVAAIVTRAEPVYGINTGFGKLATVRIDAADLATLQRNIVLSHAAGTGEPMPVAVARLMMALKLASLGQGASGVRPETVALLEAMLARGVTPLVPAQGSVGASGDLAPLAHMTAAMIGVGACIDEAGTRIPAAEALSRVGLEPLTLGPKEGLALLNGTQFSTAYALAGLFGAEDLLRAALVAGALSVDAARGSDTPFDPRIHALRRHRGQIETARALRDLLSGSAIRASHLVGDERVQDPYCLRCQPQVMGAALDLLRQAAATLETEANGVSDNPLVFPETGEALSGGNFHAEPVAFAADMIALALCEIGALSERRIALLVDPALSSGLPAFLTPRPGLNSGFMIPQVTAAALVSENKQRAHPASVDSIPTSANQEDHVSMAAHGARRLLPMVENAMAVIAIELLAAAQGCDFLAPLRSSEPLERVRARLRAAVPRLDEDRYFHPDLAAAAALVRGGAVVEAAGVGLPGVSGGVA</sequence>
<organism>
    <name type="scientific">Methylobacterium nodulans (strain LMG 21967 / CNCM I-2342 / ORS 2060)</name>
    <dbReference type="NCBI Taxonomy" id="460265"/>
    <lineage>
        <taxon>Bacteria</taxon>
        <taxon>Pseudomonadati</taxon>
        <taxon>Pseudomonadota</taxon>
        <taxon>Alphaproteobacteria</taxon>
        <taxon>Hyphomicrobiales</taxon>
        <taxon>Methylobacteriaceae</taxon>
        <taxon>Methylobacterium</taxon>
    </lineage>
</organism>
<dbReference type="EC" id="4.3.1.3" evidence="1"/>
<dbReference type="EMBL" id="CP001349">
    <property type="protein sequence ID" value="ACL56046.1"/>
    <property type="molecule type" value="Genomic_DNA"/>
</dbReference>
<dbReference type="RefSeq" id="WP_015927744.1">
    <property type="nucleotide sequence ID" value="NC_011894.1"/>
</dbReference>
<dbReference type="SMR" id="B8II08"/>
<dbReference type="STRING" id="460265.Mnod_1038"/>
<dbReference type="KEGG" id="mno:Mnod_1038"/>
<dbReference type="eggNOG" id="COG2986">
    <property type="taxonomic scope" value="Bacteria"/>
</dbReference>
<dbReference type="HOGENOM" id="CLU_014801_4_0_5"/>
<dbReference type="OrthoDB" id="9806955at2"/>
<dbReference type="UniPathway" id="UPA00379">
    <property type="reaction ID" value="UER00549"/>
</dbReference>
<dbReference type="Proteomes" id="UP000008207">
    <property type="component" value="Chromosome"/>
</dbReference>
<dbReference type="GO" id="GO:0005737">
    <property type="term" value="C:cytoplasm"/>
    <property type="evidence" value="ECO:0007669"/>
    <property type="project" value="UniProtKB-SubCell"/>
</dbReference>
<dbReference type="GO" id="GO:0004397">
    <property type="term" value="F:histidine ammonia-lyase activity"/>
    <property type="evidence" value="ECO:0007669"/>
    <property type="project" value="UniProtKB-UniRule"/>
</dbReference>
<dbReference type="GO" id="GO:0019556">
    <property type="term" value="P:L-histidine catabolic process to glutamate and formamide"/>
    <property type="evidence" value="ECO:0007669"/>
    <property type="project" value="UniProtKB-UniPathway"/>
</dbReference>
<dbReference type="GO" id="GO:0019557">
    <property type="term" value="P:L-histidine catabolic process to glutamate and formate"/>
    <property type="evidence" value="ECO:0007669"/>
    <property type="project" value="UniProtKB-UniPathway"/>
</dbReference>
<dbReference type="CDD" id="cd00332">
    <property type="entry name" value="PAL-HAL"/>
    <property type="match status" value="1"/>
</dbReference>
<dbReference type="FunFam" id="1.10.275.10:FF:000005">
    <property type="entry name" value="Histidine ammonia-lyase"/>
    <property type="match status" value="1"/>
</dbReference>
<dbReference type="FunFam" id="1.20.200.10:FF:000003">
    <property type="entry name" value="Histidine ammonia-lyase"/>
    <property type="match status" value="1"/>
</dbReference>
<dbReference type="Gene3D" id="1.20.200.10">
    <property type="entry name" value="Fumarase/aspartase (Central domain)"/>
    <property type="match status" value="1"/>
</dbReference>
<dbReference type="Gene3D" id="1.10.275.10">
    <property type="entry name" value="Fumarase/aspartase (N-terminal domain)"/>
    <property type="match status" value="1"/>
</dbReference>
<dbReference type="HAMAP" id="MF_00229">
    <property type="entry name" value="His_ammonia_lyase"/>
    <property type="match status" value="1"/>
</dbReference>
<dbReference type="InterPro" id="IPR001106">
    <property type="entry name" value="Aromatic_Lyase"/>
</dbReference>
<dbReference type="InterPro" id="IPR024083">
    <property type="entry name" value="Fumarase/histidase_N"/>
</dbReference>
<dbReference type="InterPro" id="IPR005921">
    <property type="entry name" value="HutH"/>
</dbReference>
<dbReference type="InterPro" id="IPR008948">
    <property type="entry name" value="L-Aspartase-like"/>
</dbReference>
<dbReference type="InterPro" id="IPR022313">
    <property type="entry name" value="Phe/His_NH3-lyase_AS"/>
</dbReference>
<dbReference type="NCBIfam" id="TIGR01225">
    <property type="entry name" value="hutH"/>
    <property type="match status" value="1"/>
</dbReference>
<dbReference type="NCBIfam" id="NF006871">
    <property type="entry name" value="PRK09367.1"/>
    <property type="match status" value="1"/>
</dbReference>
<dbReference type="PANTHER" id="PTHR10362">
    <property type="entry name" value="HISTIDINE AMMONIA-LYASE"/>
    <property type="match status" value="1"/>
</dbReference>
<dbReference type="Pfam" id="PF00221">
    <property type="entry name" value="Lyase_aromatic"/>
    <property type="match status" value="1"/>
</dbReference>
<dbReference type="SUPFAM" id="SSF48557">
    <property type="entry name" value="L-aspartase-like"/>
    <property type="match status" value="1"/>
</dbReference>
<dbReference type="PROSITE" id="PS00488">
    <property type="entry name" value="PAL_HISTIDASE"/>
    <property type="match status" value="1"/>
</dbReference>
<feature type="chain" id="PRO_1000125095" description="Histidine ammonia-lyase">
    <location>
        <begin position="1"/>
        <end position="515"/>
    </location>
</feature>
<feature type="modified residue" description="2,3-didehydroalanine (Ser)" evidence="1">
    <location>
        <position position="143"/>
    </location>
</feature>
<feature type="cross-link" description="5-imidazolinone (Ala-Gly)" evidence="1">
    <location>
        <begin position="142"/>
        <end position="144"/>
    </location>
</feature>
<proteinExistence type="inferred from homology"/>
<reference key="1">
    <citation type="submission" date="2009-01" db="EMBL/GenBank/DDBJ databases">
        <title>Complete sequence of chromosome of Methylobacterium nodulans ORS 2060.</title>
        <authorList>
            <consortium name="US DOE Joint Genome Institute"/>
            <person name="Lucas S."/>
            <person name="Copeland A."/>
            <person name="Lapidus A."/>
            <person name="Glavina del Rio T."/>
            <person name="Dalin E."/>
            <person name="Tice H."/>
            <person name="Bruce D."/>
            <person name="Goodwin L."/>
            <person name="Pitluck S."/>
            <person name="Sims D."/>
            <person name="Brettin T."/>
            <person name="Detter J.C."/>
            <person name="Han C."/>
            <person name="Larimer F."/>
            <person name="Land M."/>
            <person name="Hauser L."/>
            <person name="Kyrpides N."/>
            <person name="Ivanova N."/>
            <person name="Marx C.J."/>
            <person name="Richardson P."/>
        </authorList>
    </citation>
    <scope>NUCLEOTIDE SEQUENCE [LARGE SCALE GENOMIC DNA]</scope>
    <source>
        <strain>LMG 21967 / CNCM I-2342 / ORS 2060</strain>
    </source>
</reference>